<feature type="chain" id="PRO_0000045869" description="Angiotensinogen">
    <location>
        <begin position="1"/>
        <end position="14" status="greater than"/>
    </location>
</feature>
<feature type="peptide" id="PRO_0000032453" description="Angiotensin-1" evidence="4">
    <location>
        <begin position="1"/>
        <end position="10"/>
    </location>
</feature>
<feature type="peptide" id="PRO_0000420654" description="Angiotensin 1-9" evidence="2">
    <location>
        <begin position="1"/>
        <end position="9"/>
    </location>
</feature>
<feature type="peptide" id="PRO_0000032454" description="Angiotensin-2" evidence="2">
    <location>
        <begin position="1"/>
        <end position="8"/>
    </location>
</feature>
<feature type="peptide" id="PRO_0000420655" description="Angiotensin 1-7" evidence="2">
    <location>
        <begin position="1"/>
        <end position="7"/>
    </location>
</feature>
<feature type="peptide" id="PRO_0000420656" description="Angiotensin 1-5" evidence="2">
    <location>
        <begin position="1"/>
        <end position="5"/>
    </location>
</feature>
<feature type="peptide" id="PRO_0000420657" description="Angiotensin 1-4" evidence="2">
    <location>
        <begin position="1"/>
        <end position="4"/>
    </location>
</feature>
<feature type="peptide" id="PRO_0000032455" description="Angiotensin-3" evidence="2">
    <location>
        <begin position="2"/>
        <end position="8"/>
    </location>
</feature>
<feature type="peptide" id="PRO_0000420658" description="Angiotensin-4" evidence="2">
    <location>
        <begin position="3"/>
        <end position="8"/>
    </location>
</feature>
<feature type="non-terminal residue">
    <location>
        <position position="14"/>
    </location>
</feature>
<sequence length="14" mass="1759">DRVYIHPFHLLVYS</sequence>
<protein>
    <recommendedName>
        <fullName>Angiotensinogen</fullName>
    </recommendedName>
    <alternativeName>
        <fullName>Serpin A8</fullName>
    </alternativeName>
    <component>
        <recommendedName>
            <fullName>Angiotensin-1</fullName>
        </recommendedName>
        <alternativeName>
            <fullName>Angiotensin 1-10</fullName>
        </alternativeName>
        <alternativeName>
            <fullName>Angiotensin I</fullName>
            <shortName>Ang I</shortName>
        </alternativeName>
    </component>
    <component>
        <recommendedName>
            <fullName>Angiotensin-2</fullName>
        </recommendedName>
        <alternativeName>
            <fullName>Angiotensin 1-8</fullName>
        </alternativeName>
        <alternativeName>
            <fullName>Angiotensin II</fullName>
            <shortName>Ang II</shortName>
        </alternativeName>
    </component>
    <component>
        <recommendedName>
            <fullName>Angiotensin-3</fullName>
        </recommendedName>
        <alternativeName>
            <fullName>Angiotensin 2-8</fullName>
        </alternativeName>
        <alternativeName>
            <fullName>Angiotensin III</fullName>
            <shortName>Ang III</shortName>
        </alternativeName>
        <alternativeName>
            <fullName>Des-Asp[1]-angiotensin II</fullName>
        </alternativeName>
    </component>
    <component>
        <recommendedName>
            <fullName>Angiotensin-4</fullName>
        </recommendedName>
        <alternativeName>
            <fullName>Angiotensin 3-8</fullName>
        </alternativeName>
        <alternativeName>
            <fullName>Angiotensin IV</fullName>
            <shortName>Ang IV</shortName>
        </alternativeName>
    </component>
    <component>
        <recommendedName>
            <fullName>Angiotensin 1-9</fullName>
        </recommendedName>
    </component>
    <component>
        <recommendedName>
            <fullName>Angiotensin 1-7</fullName>
        </recommendedName>
    </component>
    <component>
        <recommendedName>
            <fullName>Angiotensin 1-5</fullName>
        </recommendedName>
    </component>
    <component>
        <recommendedName>
            <fullName>Angiotensin 1-4</fullName>
        </recommendedName>
    </component>
</protein>
<reference key="1">
    <citation type="journal article" date="1957" name="J. Exp. Med.">
        <title>The preparation, purification, and amino acid sequence of a polypeptide renin substrate.</title>
        <authorList>
            <person name="Skeggs L.T. Jr."/>
            <person name="Kahn J.R."/>
            <person name="Lentz K."/>
            <person name="Shumway N.P."/>
        </authorList>
    </citation>
    <scope>PROTEIN SEQUENCE</scope>
</reference>
<proteinExistence type="evidence at protein level"/>
<gene>
    <name type="primary">AGT</name>
    <name type="synonym">SERPINA8</name>
</gene>
<keyword id="KW-0002">3D-structure</keyword>
<keyword id="KW-0903">Direct protein sequencing</keyword>
<keyword id="KW-1185">Reference proteome</keyword>
<keyword id="KW-0964">Secreted</keyword>
<keyword id="KW-0838">Vasoactive</keyword>
<keyword id="KW-0839">Vasoconstrictor</keyword>
<dbReference type="PIR" id="A92775">
    <property type="entry name" value="A01250"/>
</dbReference>
<dbReference type="PDB" id="1ER8">
    <property type="method" value="X-ray"/>
    <property type="resolution" value="2.00 A"/>
    <property type="chains" value="I=7-13"/>
</dbReference>
<dbReference type="PDBsum" id="1ER8"/>
<dbReference type="SMR" id="P01016"/>
<dbReference type="MEROPS" id="I04.005"/>
<dbReference type="InParanoid" id="P01016"/>
<dbReference type="EvolutionaryTrace" id="P01016"/>
<dbReference type="Proteomes" id="UP000002281">
    <property type="component" value="Unplaced"/>
</dbReference>
<dbReference type="GO" id="GO:0005576">
    <property type="term" value="C:extracellular region"/>
    <property type="evidence" value="ECO:0007669"/>
    <property type="project" value="UniProtKB-SubCell"/>
</dbReference>
<dbReference type="GO" id="GO:0010718">
    <property type="term" value="P:positive regulation of epithelial to mesenchymal transition"/>
    <property type="evidence" value="ECO:0000250"/>
    <property type="project" value="UniProtKB"/>
</dbReference>
<dbReference type="GO" id="GO:0042310">
    <property type="term" value="P:vasoconstriction"/>
    <property type="evidence" value="ECO:0007669"/>
    <property type="project" value="UniProtKB-KW"/>
</dbReference>
<accession>P01016</accession>
<name>ANGT_HORSE</name>
<comment type="function">
    <text evidence="2">Essential component of the renin-angiotensin system (RAS), a potent regulator of blood pressure, body fluid and electrolyte homeostasis.</text>
</comment>
<comment type="function">
    <molecule>Angiotensin-2</molecule>
    <text evidence="1 2">Acts directly on vascular smooth muscle as a potent vasoconstrictor, affects cardiac contractility and heart rate through its action on the sympathetic nervous system, and alters renal sodium and water absorption through its ability to stimulate the zona glomerulosa cells of the adrenal cortex to synthesize and secrete aldosterone. Acts by binding to angiotensin receptors AGTR1 and AGTR2. Also binds the DEAR/FBXW7-AS1 receptor.</text>
</comment>
<comment type="function">
    <molecule>Angiotensin-3</molecule>
    <text evidence="2">Stimulates aldosterone release.</text>
</comment>
<comment type="function">
    <molecule>Angiotensin 1-7</molecule>
    <text evidence="3">Is a ligand for the G-protein coupled receptor MAS1. Has vasodilator and antidiuretic effects. Has an antithrombotic effect that involves MAS1-mediated release of nitric oxide from platelets.</text>
</comment>
<comment type="subcellular location">
    <subcellularLocation>
        <location evidence="6">Secreted</location>
    </subcellularLocation>
</comment>
<comment type="PTM">
    <text evidence="2">In response to low blood pressure, the enzyme renin/REN cleaves angiotensinogen to produce angiotensin-1. Angiotensin-1 is a substrate of ACE (angiotensin converting enzyme) that removes a dipeptide to yield the physiologically active peptide angiotensin-2. Angiotensin-1 and angiotensin-2 can be further processed to generate angiotensin-3, angiotensin-4. Angiotensin 1-9 is cleaved from angiotensin-1 by ACE2 and can be further processed by ACE to produce angiotensin 1-7, angiotensin 1-5 and angiotensin 1-4. Angiotensin 1-7 has also been proposed to be cleaved from angiotensin-2 by ACE2 or from angiotensin-1 by MME (neprilysin) (By similarity).</text>
</comment>
<comment type="similarity">
    <text evidence="5">Belongs to the serpin family.</text>
</comment>
<evidence type="ECO:0000250" key="1">
    <source>
        <dbReference type="UniProtKB" id="P01015"/>
    </source>
</evidence>
<evidence type="ECO:0000250" key="2">
    <source>
        <dbReference type="UniProtKB" id="P01019"/>
    </source>
</evidence>
<evidence type="ECO:0000250" key="3">
    <source>
        <dbReference type="UniProtKB" id="P11859"/>
    </source>
</evidence>
<evidence type="ECO:0000269" key="4">
    <source>
    </source>
</evidence>
<evidence type="ECO:0000305" key="5"/>
<evidence type="ECO:0000305" key="6">
    <source>
    </source>
</evidence>
<organism>
    <name type="scientific">Equus caballus</name>
    <name type="common">Horse</name>
    <dbReference type="NCBI Taxonomy" id="9796"/>
    <lineage>
        <taxon>Eukaryota</taxon>
        <taxon>Metazoa</taxon>
        <taxon>Chordata</taxon>
        <taxon>Craniata</taxon>
        <taxon>Vertebrata</taxon>
        <taxon>Euteleostomi</taxon>
        <taxon>Mammalia</taxon>
        <taxon>Eutheria</taxon>
        <taxon>Laurasiatheria</taxon>
        <taxon>Perissodactyla</taxon>
        <taxon>Equidae</taxon>
        <taxon>Equus</taxon>
    </lineage>
</organism>